<organism>
    <name type="scientific">Mus musculus</name>
    <name type="common">Mouse</name>
    <dbReference type="NCBI Taxonomy" id="10090"/>
    <lineage>
        <taxon>Eukaryota</taxon>
        <taxon>Metazoa</taxon>
        <taxon>Chordata</taxon>
        <taxon>Craniata</taxon>
        <taxon>Vertebrata</taxon>
        <taxon>Euteleostomi</taxon>
        <taxon>Mammalia</taxon>
        <taxon>Eutheria</taxon>
        <taxon>Euarchontoglires</taxon>
        <taxon>Glires</taxon>
        <taxon>Rodentia</taxon>
        <taxon>Myomorpha</taxon>
        <taxon>Muroidea</taxon>
        <taxon>Muridae</taxon>
        <taxon>Murinae</taxon>
        <taxon>Mus</taxon>
        <taxon>Mus</taxon>
    </lineage>
</organism>
<keyword id="KW-1015">Disulfide bond</keyword>
<keyword id="KW-0472">Membrane</keyword>
<keyword id="KW-0479">Metal-binding</keyword>
<keyword id="KW-0576">Peroxisome</keyword>
<keyword id="KW-0962">Peroxisome biogenesis</keyword>
<keyword id="KW-0653">Protein transport</keyword>
<keyword id="KW-1185">Reference proteome</keyword>
<keyword id="KW-0808">Transferase</keyword>
<keyword id="KW-0812">Transmembrane</keyword>
<keyword id="KW-1133">Transmembrane helix</keyword>
<keyword id="KW-0813">Transport</keyword>
<keyword id="KW-0833">Ubl conjugation pathway</keyword>
<keyword id="KW-0862">Zinc</keyword>
<keyword id="KW-0863">Zinc-finger</keyword>
<gene>
    <name evidence="14 16" type="primary">Pex2</name>
    <name evidence="13" type="synonym">Paf1</name>
    <name evidence="13" type="synonym">Pmp35</name>
    <name type="synonym">Pxmp3</name>
</gene>
<dbReference type="EC" id="2.3.2.27" evidence="3"/>
<dbReference type="EC" id="2.3.2.36" evidence="3"/>
<dbReference type="EMBL" id="L27842">
    <property type="protein sequence ID" value="AAA21742.1"/>
    <property type="molecule type" value="Genomic_DNA"/>
</dbReference>
<dbReference type="EMBL" id="AF031128">
    <property type="protein sequence ID" value="AAB91465.1"/>
    <property type="molecule type" value="mRNA"/>
</dbReference>
<dbReference type="PIR" id="I52362">
    <property type="entry name" value="I52362"/>
</dbReference>
<dbReference type="RefSeq" id="NP_001156773.1">
    <property type="nucleotide sequence ID" value="NM_001163301.2"/>
</dbReference>
<dbReference type="RefSeq" id="NP_001156774.1">
    <property type="nucleotide sequence ID" value="NM_001163302.2"/>
</dbReference>
<dbReference type="RefSeq" id="NP_001156777.1">
    <property type="nucleotide sequence ID" value="NM_001163305.2"/>
</dbReference>
<dbReference type="RefSeq" id="NP_001156778.1">
    <property type="nucleotide sequence ID" value="NM_001163306.2"/>
</dbReference>
<dbReference type="RefSeq" id="NP_001254643.1">
    <property type="nucleotide sequence ID" value="NM_001267714.1"/>
</dbReference>
<dbReference type="RefSeq" id="NP_001254644.1">
    <property type="nucleotide sequence ID" value="NM_001267715.1"/>
</dbReference>
<dbReference type="RefSeq" id="NP_033020.2">
    <property type="nucleotide sequence ID" value="NM_008994.4"/>
</dbReference>
<dbReference type="RefSeq" id="XP_006530121.1">
    <property type="nucleotide sequence ID" value="XM_006530058.3"/>
</dbReference>
<dbReference type="RefSeq" id="XP_006530122.1">
    <property type="nucleotide sequence ID" value="XM_006530059.2"/>
</dbReference>
<dbReference type="RefSeq" id="XP_011246442.1">
    <property type="nucleotide sequence ID" value="XM_011248140.2"/>
</dbReference>
<dbReference type="RefSeq" id="XP_017174994.1">
    <property type="nucleotide sequence ID" value="XM_017319505.1"/>
</dbReference>
<dbReference type="SMR" id="P55098"/>
<dbReference type="BioGRID" id="202524">
    <property type="interactions" value="1"/>
</dbReference>
<dbReference type="FunCoup" id="P55098">
    <property type="interactions" value="1213"/>
</dbReference>
<dbReference type="IntAct" id="P55098">
    <property type="interactions" value="2"/>
</dbReference>
<dbReference type="MINT" id="P55098"/>
<dbReference type="STRING" id="10090.ENSMUSP00000129311"/>
<dbReference type="PhosphoSitePlus" id="P55098"/>
<dbReference type="PaxDb" id="10090-ENSMUSP00000071255"/>
<dbReference type="ProteomicsDB" id="289473"/>
<dbReference type="DNASU" id="19302"/>
<dbReference type="GeneID" id="19302"/>
<dbReference type="KEGG" id="mmu:19302"/>
<dbReference type="AGR" id="MGI:107486"/>
<dbReference type="CTD" id="5828"/>
<dbReference type="MGI" id="MGI:107486">
    <property type="gene designation" value="Pex2"/>
</dbReference>
<dbReference type="eggNOG" id="KOG2879">
    <property type="taxonomic scope" value="Eukaryota"/>
</dbReference>
<dbReference type="InParanoid" id="P55098"/>
<dbReference type="OrthoDB" id="1701437at2759"/>
<dbReference type="PhylomeDB" id="P55098"/>
<dbReference type="Reactome" id="R-MMU-8866654">
    <property type="pathway name" value="E3 ubiquitin ligases ubiquitinate target proteins"/>
</dbReference>
<dbReference type="Reactome" id="R-MMU-9033241">
    <property type="pathway name" value="Peroxisomal protein import"/>
</dbReference>
<dbReference type="Reactome" id="R-MMU-9603798">
    <property type="pathway name" value="Class I peroxisomal membrane protein import"/>
</dbReference>
<dbReference type="UniPathway" id="UPA00143"/>
<dbReference type="BioGRID-ORCS" id="19302">
    <property type="hits" value="10 hits in 77 CRISPR screens"/>
</dbReference>
<dbReference type="CD-CODE" id="CE726F99">
    <property type="entry name" value="Postsynaptic density"/>
</dbReference>
<dbReference type="ChiTaRS" id="Pex2">
    <property type="organism name" value="mouse"/>
</dbReference>
<dbReference type="PRO" id="PR:P55098"/>
<dbReference type="Proteomes" id="UP000000589">
    <property type="component" value="Unplaced"/>
</dbReference>
<dbReference type="RNAct" id="P55098">
    <property type="molecule type" value="protein"/>
</dbReference>
<dbReference type="GO" id="GO:0005778">
    <property type="term" value="C:peroxisomal membrane"/>
    <property type="evidence" value="ECO:0007669"/>
    <property type="project" value="UniProtKB-SubCell"/>
</dbReference>
<dbReference type="GO" id="GO:0061630">
    <property type="term" value="F:ubiquitin protein ligase activity"/>
    <property type="evidence" value="ECO:0000250"/>
    <property type="project" value="UniProtKB"/>
</dbReference>
<dbReference type="GO" id="GO:0008270">
    <property type="term" value="F:zinc ion binding"/>
    <property type="evidence" value="ECO:0007669"/>
    <property type="project" value="UniProtKB-KW"/>
</dbReference>
<dbReference type="GO" id="GO:0006699">
    <property type="term" value="P:bile acid biosynthetic process"/>
    <property type="evidence" value="ECO:0000315"/>
    <property type="project" value="MGI"/>
</dbReference>
<dbReference type="GO" id="GO:0042632">
    <property type="term" value="P:cholesterol homeostasis"/>
    <property type="evidence" value="ECO:0000315"/>
    <property type="project" value="MGI"/>
</dbReference>
<dbReference type="GO" id="GO:0007399">
    <property type="term" value="P:nervous system development"/>
    <property type="evidence" value="ECO:0000315"/>
    <property type="project" value="MGI"/>
</dbReference>
<dbReference type="GO" id="GO:0001764">
    <property type="term" value="P:neuron migration"/>
    <property type="evidence" value="ECO:0000315"/>
    <property type="project" value="MGI"/>
</dbReference>
<dbReference type="GO" id="GO:0007031">
    <property type="term" value="P:peroxisome organization"/>
    <property type="evidence" value="ECO:0000315"/>
    <property type="project" value="UniProtKB"/>
</dbReference>
<dbReference type="GO" id="GO:0000425">
    <property type="term" value="P:pexophagy"/>
    <property type="evidence" value="ECO:0000250"/>
    <property type="project" value="UniProtKB"/>
</dbReference>
<dbReference type="GO" id="GO:0016562">
    <property type="term" value="P:protein import into peroxisome matrix, receptor recycling"/>
    <property type="evidence" value="ECO:0000250"/>
    <property type="project" value="UniProtKB"/>
</dbReference>
<dbReference type="GO" id="GO:0016567">
    <property type="term" value="P:protein ubiquitination"/>
    <property type="evidence" value="ECO:0007669"/>
    <property type="project" value="UniProtKB-UniPathway"/>
</dbReference>
<dbReference type="GO" id="GO:0045540">
    <property type="term" value="P:regulation of cholesterol biosynthetic process"/>
    <property type="evidence" value="ECO:0000315"/>
    <property type="project" value="MGI"/>
</dbReference>
<dbReference type="GO" id="GO:1990928">
    <property type="term" value="P:response to amino acid starvation"/>
    <property type="evidence" value="ECO:0000250"/>
    <property type="project" value="UniProtKB"/>
</dbReference>
<dbReference type="CDD" id="cd16526">
    <property type="entry name" value="RING-HC_PEX2"/>
    <property type="match status" value="1"/>
</dbReference>
<dbReference type="FunFam" id="3.30.40.10:FF:000480">
    <property type="entry name" value="Peroxisome biogenesis factor 2"/>
    <property type="match status" value="1"/>
</dbReference>
<dbReference type="Gene3D" id="3.30.40.10">
    <property type="entry name" value="Zinc/RING finger domain, C3HC4 (zinc finger)"/>
    <property type="match status" value="1"/>
</dbReference>
<dbReference type="InterPro" id="IPR025654">
    <property type="entry name" value="PEX2/10"/>
</dbReference>
<dbReference type="InterPro" id="IPR006845">
    <property type="entry name" value="Pex_N"/>
</dbReference>
<dbReference type="InterPro" id="IPR045859">
    <property type="entry name" value="RING-HC_PEX2"/>
</dbReference>
<dbReference type="InterPro" id="IPR001841">
    <property type="entry name" value="Znf_RING"/>
</dbReference>
<dbReference type="InterPro" id="IPR013083">
    <property type="entry name" value="Znf_RING/FYVE/PHD"/>
</dbReference>
<dbReference type="InterPro" id="IPR017907">
    <property type="entry name" value="Znf_RING_CS"/>
</dbReference>
<dbReference type="PANTHER" id="PTHR48178">
    <property type="entry name" value="PEROXISOME BIOGENESIS FACTOR 2"/>
    <property type="match status" value="1"/>
</dbReference>
<dbReference type="PANTHER" id="PTHR48178:SF1">
    <property type="entry name" value="PEROXISOME BIOGENESIS FACTOR 2"/>
    <property type="match status" value="1"/>
</dbReference>
<dbReference type="Pfam" id="PF04757">
    <property type="entry name" value="Pex2_Pex12"/>
    <property type="match status" value="1"/>
</dbReference>
<dbReference type="SMART" id="SM00184">
    <property type="entry name" value="RING"/>
    <property type="match status" value="1"/>
</dbReference>
<dbReference type="SUPFAM" id="SSF57850">
    <property type="entry name" value="RING/U-box"/>
    <property type="match status" value="1"/>
</dbReference>
<dbReference type="PROSITE" id="PS00518">
    <property type="entry name" value="ZF_RING_1"/>
    <property type="match status" value="1"/>
</dbReference>
<dbReference type="PROSITE" id="PS50089">
    <property type="entry name" value="ZF_RING_2"/>
    <property type="match status" value="1"/>
</dbReference>
<comment type="function">
    <text evidence="2 3 11">E3 ubiquitin-protein ligase component of a retrotranslocation channel required for peroxisome organization by mediating export of the PEX5 receptor from peroxisomes to the cytosol, thereby promoting PEX5 recycling (By similarity). The retrotranslocation channel is composed of PEX2, PEX10 and PEX12; each subunit contributing transmembrane segments that coassemble into an open channel that specifically allows the passage of PEX5 through the peroxisomal membrane (By similarity). PEX2 also regulates peroxisome organization by acting as a E3 ubiquitin-protein ligase (By similarity). PEX2 ubiquitinates PEX5 during its passage through the retrotranslocation channel: catalyzes monoubiquitination of PEX5 at 'Cys-11', a modification that acts as a signal for PEX5 extraction into the cytosol (By similarity). Required for pexophagy in response to starvation by mediating ubiquitination of peroxisomal proteins, such as PEX5 and ABCD3/PMP70 (By similarity). Also involved in the response to reactive oxygen species (ROS) by mediating 'Lys-48'-linked polyubiquitination and subsequent degradation of PNPLA2/ATGL, thereby regulating lipolysis (PubMed:34903883).</text>
</comment>
<comment type="catalytic activity">
    <reaction evidence="3">
        <text>[E2 ubiquitin-conjugating enzyme]-S-ubiquitinyl-L-cysteine + [acceptor protein]-L-cysteine = [E2 ubiquitin-conjugating enzyme]-L-cysteine + [acceptor protein]-S-ubiquitinyl-L-cysteine.</text>
        <dbReference type="EC" id="2.3.2.36"/>
    </reaction>
</comment>
<comment type="catalytic activity">
    <reaction evidence="2">
        <text>S-ubiquitinyl-[E2 ubiquitin-conjugating enzyme]-L-cysteine + [acceptor protein]-L-lysine = [E2 ubiquitin-conjugating enzyme]-L-cysteine + N(6)-ubiquitinyl-[acceptor protein]-L-lysine.</text>
        <dbReference type="EC" id="2.3.2.27"/>
    </reaction>
</comment>
<comment type="pathway">
    <text evidence="2">Protein modification; protein ubiquitination.</text>
</comment>
<comment type="subunit">
    <text evidence="2">Component of the PEX2-PEX10-PEX12 retrotranslocation channel, composed of PEX2, PEX10 and PEX12.</text>
</comment>
<comment type="subcellular location">
    <subcellularLocation>
        <location evidence="2">Peroxisome membrane</location>
        <topology evidence="4">Multi-pass membrane protein</topology>
    </subcellularLocation>
</comment>
<comment type="domain">
    <text evidence="1">The three subunits of the retrotranslocation channel (PEX2, PEX10 and PEX12) coassemble in the membrane into a channel with an open 10 Angstrom pore. The RING-type zinc-fingers that catalyze PEX5 receptor ubiquitination are positioned above the pore on the cytosolic side of the complex.</text>
</comment>
<comment type="PTM">
    <text evidence="2">Forms intramolecular and intermolecular disulfide bonds in response to reactive oxygen species (ROS), promoting higher stability.</text>
</comment>
<comment type="disruption phenotype">
    <text evidence="6 7 8 9 10 12">Mice in a C57BL/6J x 129/Sv strain background die several hours after birth (PubMed:9382874). Mutant mice do not feed and are hypoactive and markedly hypotonic (PubMed:9382874). Cells show defects in peroxisomes, characterized by an accumulation of very long chain fatty acids in plasma and deficient erythrocyte plasmalogens (PubMed:9382874). A significant proportion of mice in a Swiss Webster x 129/SvEv strain background survive 7-14 postnatal days (PubMed:12746876). Surviving mice display defects in cerebellar growth, characterized by a reduced granule neuron population, abnormal Purkinje cell dendrite development (PubMed:12746876). Peroxisome deficiency increases cell death in the developing cerebellum (PubMed:12746876). Defects in peroxisomes cause impaired hepatic cholesterol homeostasis (PubMed:14673138, PubMed:19110480). Peroxisome deficiency activates hepatic endoplasmic reticulum stress pathways, such as the integrated stress response (ISR), leading to dysregulation of the endogenous sterol response mechanism and subsequent SREBF2 activation (PubMed:19110480, PubMed:22441164). Conditional deletion in brain of adult mice leads to impaired BDNF signaling, resulting in memory defects (PubMed:33163488).</text>
</comment>
<comment type="similarity">
    <text evidence="15">Belongs to the pex2/pex10/pex12 family.</text>
</comment>
<reference key="1">
    <citation type="journal article" date="1994" name="Biochem. Med. Metab. Biol.">
        <title>Structure and expression of mammalian peroxisome assembly factor-1 (PMP35) genes.</title>
        <authorList>
            <person name="Wilson G.N."/>
            <person name="Bryant D.D."/>
        </authorList>
    </citation>
    <scope>NUCLEOTIDE SEQUENCE [GENOMIC DNA]</scope>
    <source>
        <strain>Swiss Webster</strain>
        <tissue>Liver</tissue>
    </source>
</reference>
<reference key="2">
    <citation type="journal article" date="1997" name="J. Cell Biol.">
        <title>Targeted deletion of the PEX2 peroxisome assembly gene in mice provides a model for Zellweger syndrome, a human neuronal migration disorder.</title>
        <authorList>
            <person name="Faust P.L."/>
            <person name="Hatten M.E."/>
        </authorList>
    </citation>
    <scope>NUCLEOTIDE SEQUENCE [MRNA]</scope>
    <scope>DISRUPTION PHENOTYPE</scope>
    <source>
        <strain>C57BL/6J</strain>
        <tissue>Cerebellum</tissue>
    </source>
</reference>
<reference key="3">
    <citation type="journal article" date="2003" name="J. Comp. Neurol.">
        <title>Abnormal cerebellar histogenesis in PEX2 Zellweger mice reflects multiple neuronal defects induced by peroxisome deficiency.</title>
        <authorList>
            <person name="Faust P.L."/>
        </authorList>
    </citation>
    <scope>DISRUPTION PHENOTYPE</scope>
</reference>
<reference key="4">
    <citation type="journal article" date="2004" name="Mol. Cell. Biol.">
        <title>Disturbed cholesterol homeostasis in a peroxisome-deficient PEX2 knockout mouse model.</title>
        <authorList>
            <person name="Kovacs W.J."/>
            <person name="Shackelford J.E."/>
            <person name="Tape K.N."/>
            <person name="Richards M.J."/>
            <person name="Faust P.L."/>
            <person name="Fliesler S.J."/>
            <person name="Krisans S.K."/>
        </authorList>
    </citation>
    <scope>DISRUPTION PHENOTYPE</scope>
</reference>
<reference key="5">
    <citation type="journal article" date="2009" name="J. Biol. Chem.">
        <title>Peroxisome deficiency causes a complex phenotype because of hepatic SREBP/Insig dysregulation associated with endoplasmic reticulum stress.</title>
        <authorList>
            <person name="Kovacs W.J."/>
            <person name="Tape K.N."/>
            <person name="Shackelford J.E."/>
            <person name="Wikander T.M."/>
            <person name="Richards M.J."/>
            <person name="Fliesler S.J."/>
            <person name="Krisans S.K."/>
            <person name="Faust P.L."/>
        </authorList>
    </citation>
    <scope>DISRUPTION PHENOTYPE</scope>
</reference>
<reference key="6">
    <citation type="journal article" date="2012" name="Biochim. Biophys. Acta">
        <title>Peroxisome deficiency-induced ER stress and SREBP-2 pathway activation in the liver of newborn PEX2 knock-out mice.</title>
        <authorList>
            <person name="Kovacs W.J."/>
            <person name="Charles K.N."/>
            <person name="Walter K.M."/>
            <person name="Shackelford J.E."/>
            <person name="Wikander T.M."/>
            <person name="Richards M.J."/>
            <person name="Fliesler S.J."/>
            <person name="Krisans S.K."/>
            <person name="Faust P.L."/>
        </authorList>
    </citation>
    <scope>DISRUPTION PHENOTYPE</scope>
</reference>
<reference key="7">
    <citation type="journal article" date="2020" name="Front. Cell Dev. Biol.">
        <title>Peroxisome deficiency impairs BDNF signaling and memory.</title>
        <authorList>
            <person name="Abe Y."/>
            <person name="Nishimura Y."/>
            <person name="Nakamura K."/>
            <person name="Tamura S."/>
            <person name="Honsho M."/>
            <person name="Udo H."/>
            <person name="Yamashita T."/>
            <person name="Fujiki Y."/>
        </authorList>
    </citation>
    <scope>DISRUPTION PHENOTYPEE</scope>
</reference>
<reference key="8">
    <citation type="journal article" date="2021" name="Nat. Metab.">
        <title>Peroxisomal beta-oxidation acts as a sensor for intracellular fatty acids and regulates lipolysis.</title>
        <authorList>
            <person name="Ding L."/>
            <person name="Sun W."/>
            <person name="Balaz M."/>
            <person name="He A."/>
            <person name="Klug M."/>
            <person name="Wieland S."/>
            <person name="Caiazzo R."/>
            <person name="Raverdy V."/>
            <person name="Pattou F."/>
            <person name="Lefebvre P."/>
            <person name="Lodhi I.J."/>
            <person name="Staels B."/>
            <person name="Heim M."/>
            <person name="Wolfrum C."/>
        </authorList>
    </citation>
    <scope>FUNCTION</scope>
</reference>
<name>PEX2_MOUSE</name>
<accession>P55098</accession>
<accession>O35467</accession>
<proteinExistence type="evidence at transcript level"/>
<feature type="chain" id="PRO_0000056370" description="Peroxisome biogenesis factor 2">
    <location>
        <begin position="1"/>
        <end position="305"/>
    </location>
</feature>
<feature type="topological domain" description="Peroxisomal matrix" evidence="1">
    <location>
        <begin position="1"/>
        <end position="15"/>
    </location>
</feature>
<feature type="transmembrane region" description="Helical; Name=TM1" evidence="1">
    <location>
        <begin position="16"/>
        <end position="42"/>
    </location>
</feature>
<feature type="topological domain" description="Cytoplasmic" evidence="1">
    <location>
        <begin position="43"/>
        <end position="48"/>
    </location>
</feature>
<feature type="transmembrane region" description="Helical; Name=TM2" evidence="1">
    <location>
        <begin position="49"/>
        <end position="74"/>
    </location>
</feature>
<feature type="topological domain" description="Peroxisomal matrix" evidence="1">
    <location>
        <begin position="75"/>
        <end position="98"/>
    </location>
</feature>
<feature type="transmembrane region" description="Helical; Name=TM3" evidence="1">
    <location>
        <begin position="99"/>
        <end position="125"/>
    </location>
</feature>
<feature type="topological domain" description="Cytoplasmic" evidence="1">
    <location>
        <begin position="126"/>
        <end position="133"/>
    </location>
</feature>
<feature type="transmembrane region" description="Helical; Name=TM4" evidence="1">
    <location>
        <begin position="134"/>
        <end position="160"/>
    </location>
</feature>
<feature type="topological domain" description="Peroxisomal matrix" evidence="1">
    <location>
        <begin position="161"/>
        <end position="187"/>
    </location>
</feature>
<feature type="transmembrane region" description="Helical; Name=TM5" evidence="1">
    <location>
        <begin position="188"/>
        <end position="211"/>
    </location>
</feature>
<feature type="topological domain" description="Cytoplasmic" evidence="1">
    <location>
        <begin position="212"/>
        <end position="305"/>
    </location>
</feature>
<feature type="zinc finger region" description="RING-type" evidence="5">
    <location>
        <begin position="244"/>
        <end position="284"/>
    </location>
</feature>
<feature type="binding site" evidence="1">
    <location>
        <position position="244"/>
    </location>
    <ligand>
        <name>Zn(2+)</name>
        <dbReference type="ChEBI" id="CHEBI:29105"/>
        <label>1</label>
    </ligand>
</feature>
<feature type="binding site" evidence="1">
    <location>
        <position position="247"/>
    </location>
    <ligand>
        <name>Zn(2+)</name>
        <dbReference type="ChEBI" id="CHEBI:29105"/>
        <label>1</label>
    </ligand>
</feature>
<feature type="binding site" evidence="1">
    <location>
        <position position="259"/>
    </location>
    <ligand>
        <name>Zn(2+)</name>
        <dbReference type="ChEBI" id="CHEBI:29105"/>
        <label>2</label>
    </ligand>
</feature>
<feature type="binding site" evidence="1">
    <location>
        <position position="261"/>
    </location>
    <ligand>
        <name>Zn(2+)</name>
        <dbReference type="ChEBI" id="CHEBI:29105"/>
        <label>2</label>
    </ligand>
</feature>
<feature type="binding site" evidence="1">
    <location>
        <position position="264"/>
    </location>
    <ligand>
        <name>Zn(2+)</name>
        <dbReference type="ChEBI" id="CHEBI:29105"/>
        <label>1</label>
    </ligand>
</feature>
<feature type="binding site" evidence="1">
    <location>
        <position position="267"/>
    </location>
    <ligand>
        <name>Zn(2+)</name>
        <dbReference type="ChEBI" id="CHEBI:29105"/>
        <label>1</label>
    </ligand>
</feature>
<feature type="binding site" evidence="1">
    <location>
        <position position="280"/>
    </location>
    <ligand>
        <name>Zn(2+)</name>
        <dbReference type="ChEBI" id="CHEBI:29105"/>
        <label>2</label>
    </ligand>
</feature>
<feature type="binding site" evidence="1">
    <location>
        <position position="283"/>
    </location>
    <ligand>
        <name>Zn(2+)</name>
        <dbReference type="ChEBI" id="CHEBI:29105"/>
        <label>2</label>
    </ligand>
</feature>
<feature type="sequence conflict" description="In Ref. 2; AAB91465." evidence="15" ref="2">
    <original>MAAREEST</original>
    <variation>MTGKEENM</variation>
    <location>
        <begin position="1"/>
        <end position="8"/>
    </location>
</feature>
<feature type="sequence conflict" description="In Ref. 2; AAB91465." evidence="15" ref="2">
    <original>H</original>
    <variation>Y</variation>
    <location>
        <position position="85"/>
    </location>
</feature>
<feature type="sequence conflict" description="In Ref. 2; AAB91465." evidence="15" ref="2">
    <original>PNPV</original>
    <variation>LNLI</variation>
    <location>
        <begin position="91"/>
        <end position="94"/>
    </location>
</feature>
<feature type="sequence conflict" description="In Ref. 2; AAB91465." evidence="15" ref="2">
    <original>N</original>
    <variation>T</variation>
    <location>
        <position position="101"/>
    </location>
</feature>
<feature type="sequence conflict" description="In Ref. 2; AAB91465." evidence="15" ref="2">
    <original>L</original>
    <variation>W</variation>
    <location>
        <position position="105"/>
    </location>
</feature>
<feature type="sequence conflict" description="In Ref. 2; AAB91465." evidence="15" ref="2">
    <original>R</original>
    <variation>K</variation>
    <location>
        <position position="114"/>
    </location>
</feature>
<feature type="sequence conflict" description="In Ref. 2; AAB91465." evidence="15" ref="2">
    <original>C</original>
    <variation>F</variation>
    <location>
        <position position="138"/>
    </location>
</feature>
<feature type="sequence conflict" description="In Ref. 2; AAB91465." evidence="15" ref="2">
    <original>V</original>
    <variation>L</variation>
    <location>
        <position position="142"/>
    </location>
</feature>
<feature type="sequence conflict" description="In Ref. 2; AAB91465." evidence="15" ref="2">
    <original>M</original>
    <variation>I</variation>
    <location>
        <position position="152"/>
    </location>
</feature>
<feature type="sequence conflict" description="In Ref. 2; AAB91465." evidence="15" ref="2">
    <original>TLC</original>
    <variation>IPL</variation>
    <location>
        <begin position="225"/>
        <end position="227"/>
    </location>
</feature>
<feature type="sequence conflict" description="In Ref. 2; AAB91465." evidence="15" ref="2">
    <original>A</original>
    <variation>S</variation>
    <location>
        <position position="295"/>
    </location>
</feature>
<feature type="sequence conflict" description="In Ref. 2; AAB91465." evidence="15" ref="2">
    <original>Q</original>
    <variation>E</variation>
    <location>
        <position position="298"/>
    </location>
</feature>
<sequence>MAAREESTQSANRVLRISQLDALELNKALEQLVWSQFTQCFHGFKPGLLARFEPEVKAFLWLFLWRFTIYSKNATVGQSVLNIQHKNDSSPNPVYQPPSKNQKLLYAVCTIGGRWLEERCYDLFRNRHLASFGKAKQCMNFVVGLLKLGELMNFLIFLQKGKFATLTERLLGIHSVFCKPQNMREVGFEYMNRELLWHGFAEFLIFLLPLINIQKLKAKLSSWCTLCTGAAGHDSTLGSSGKECALCGEWPTMPHTIGCEHVFCYYCVKSSFLFDIYFTCPKCGTEVHSVQPLKAGIQMSEVNAL</sequence>
<protein>
    <recommendedName>
        <fullName evidence="15">Peroxisome biogenesis factor 2</fullName>
        <ecNumber evidence="3">2.3.2.27</ecNumber>
        <ecNumber evidence="3">2.3.2.36</ecNumber>
    </recommendedName>
    <alternativeName>
        <fullName evidence="15">Peroxin-2</fullName>
    </alternativeName>
    <alternativeName>
        <fullName>Peroxisomal membrane protein 3</fullName>
    </alternativeName>
    <alternativeName>
        <fullName evidence="13">Peroxisome assembly factor 1</fullName>
        <shortName evidence="13">PAF-1</shortName>
    </alternativeName>
</protein>
<evidence type="ECO:0000250" key="1">
    <source>
        <dbReference type="UniProtKB" id="G2Q1C9"/>
    </source>
</evidence>
<evidence type="ECO:0000250" key="2">
    <source>
        <dbReference type="UniProtKB" id="P28328"/>
    </source>
</evidence>
<evidence type="ECO:0000250" key="3">
    <source>
        <dbReference type="UniProtKB" id="P32800"/>
    </source>
</evidence>
<evidence type="ECO:0000255" key="4"/>
<evidence type="ECO:0000255" key="5">
    <source>
        <dbReference type="PROSITE-ProRule" id="PRU00175"/>
    </source>
</evidence>
<evidence type="ECO:0000269" key="6">
    <source>
    </source>
</evidence>
<evidence type="ECO:0000269" key="7">
    <source>
    </source>
</evidence>
<evidence type="ECO:0000269" key="8">
    <source>
    </source>
</evidence>
<evidence type="ECO:0000269" key="9">
    <source>
    </source>
</evidence>
<evidence type="ECO:0000269" key="10">
    <source>
    </source>
</evidence>
<evidence type="ECO:0000269" key="11">
    <source>
    </source>
</evidence>
<evidence type="ECO:0000269" key="12">
    <source>
    </source>
</evidence>
<evidence type="ECO:0000303" key="13">
    <source>
    </source>
</evidence>
<evidence type="ECO:0000303" key="14">
    <source>
    </source>
</evidence>
<evidence type="ECO:0000305" key="15"/>
<evidence type="ECO:0000312" key="16">
    <source>
        <dbReference type="MGI" id="MGI:107486"/>
    </source>
</evidence>